<evidence type="ECO:0000255" key="1">
    <source>
        <dbReference type="PROSITE-ProRule" id="PRU00040"/>
    </source>
</evidence>
<evidence type="ECO:0000269" key="2">
    <source>
    </source>
</evidence>
<evidence type="ECO:0000269" key="3">
    <source>
    </source>
</evidence>
<evidence type="ECO:0000269" key="4">
    <source>
    </source>
</evidence>
<evidence type="ECO:0000269" key="5">
    <source>
    </source>
</evidence>
<evidence type="ECO:0000269" key="6">
    <source ref="5"/>
</evidence>
<evidence type="ECO:0000305" key="7"/>
<evidence type="ECO:0007829" key="8">
    <source>
        <dbReference type="PDB" id="1WT9"/>
    </source>
</evidence>
<proteinExistence type="evidence at protein level"/>
<keyword id="KW-0002">3D-structure</keyword>
<keyword id="KW-1203">Blood coagulation cascade inhibiting toxin</keyword>
<keyword id="KW-0106">Calcium</keyword>
<keyword id="KW-0903">Direct protein sequencing</keyword>
<keyword id="KW-1015">Disulfide bond</keyword>
<keyword id="KW-1199">Hemostasis impairing toxin</keyword>
<keyword id="KW-0479">Metal-binding</keyword>
<keyword id="KW-1201">Platelet aggregation inhibiting toxin</keyword>
<keyword id="KW-0964">Secreted</keyword>
<keyword id="KW-0732">Signal</keyword>
<keyword id="KW-0800">Toxin</keyword>
<feature type="signal peptide" evidence="2">
    <location>
        <begin position="1"/>
        <end position="23"/>
    </location>
</feature>
<feature type="chain" id="PRO_0000346755" description="Snaclec agkisacutacin subunit A">
    <location>
        <begin position="24"/>
        <end position="152"/>
    </location>
</feature>
<feature type="domain" description="C-type lectin" evidence="1">
    <location>
        <begin position="24"/>
        <end position="152"/>
    </location>
</feature>
<feature type="binding site">
    <location>
        <position position="64"/>
    </location>
    <ligand>
        <name>Ca(2+)</name>
        <dbReference type="ChEBI" id="CHEBI:29108"/>
    </ligand>
</feature>
<feature type="binding site">
    <location>
        <position position="66"/>
    </location>
    <ligand>
        <name>Ca(2+)</name>
        <dbReference type="ChEBI" id="CHEBI:29108"/>
    </ligand>
</feature>
<feature type="binding site">
    <location>
        <position position="70"/>
    </location>
    <ligand>
        <name>Ca(2+)</name>
        <dbReference type="ChEBI" id="CHEBI:29108"/>
    </ligand>
</feature>
<feature type="binding site">
    <location>
        <position position="151"/>
    </location>
    <ligand>
        <name>Ca(2+)</name>
        <dbReference type="ChEBI" id="CHEBI:29108"/>
    </ligand>
</feature>
<feature type="disulfide bond">
    <location>
        <begin position="25"/>
        <end position="36"/>
    </location>
</feature>
<feature type="disulfide bond">
    <location>
        <begin position="53"/>
        <end position="150"/>
    </location>
</feature>
<feature type="disulfide bond" description="Interchain (with C-98 in subunit B)">
    <location>
        <position position="102"/>
    </location>
</feature>
<feature type="disulfide bond">
    <location>
        <begin position="125"/>
        <end position="142"/>
    </location>
</feature>
<feature type="strand" evidence="8">
    <location>
        <begin position="30"/>
        <end position="32"/>
    </location>
</feature>
<feature type="strand" evidence="8">
    <location>
        <begin position="35"/>
        <end position="44"/>
    </location>
</feature>
<feature type="helix" evidence="8">
    <location>
        <begin position="46"/>
        <end position="56"/>
    </location>
</feature>
<feature type="helix" evidence="8">
    <location>
        <begin position="68"/>
        <end position="81"/>
    </location>
</feature>
<feature type="strand" evidence="8">
    <location>
        <begin position="85"/>
        <end position="87"/>
    </location>
</feature>
<feature type="strand" evidence="8">
    <location>
        <begin position="89"/>
        <end position="95"/>
    </location>
</feature>
<feature type="strand" evidence="8">
    <location>
        <begin position="98"/>
        <end position="100"/>
    </location>
</feature>
<feature type="helix" evidence="8">
    <location>
        <begin position="119"/>
        <end position="121"/>
    </location>
</feature>
<feature type="strand" evidence="8">
    <location>
        <begin position="125"/>
        <end position="128"/>
    </location>
</feature>
<feature type="helix" evidence="8">
    <location>
        <begin position="130"/>
        <end position="132"/>
    </location>
</feature>
<feature type="strand" evidence="8">
    <location>
        <begin position="136"/>
        <end position="140"/>
    </location>
</feature>
<feature type="strand" evidence="8">
    <location>
        <begin position="146"/>
        <end position="151"/>
    </location>
</feature>
<protein>
    <recommendedName>
        <fullName>Snaclec agkisacutacin subunit A</fullName>
        <shortName>Agk-A</shortName>
    </recommendedName>
</protein>
<reference key="1">
    <citation type="journal article" date="1999" name="Biochem. Biophys. Res. Commun.">
        <title>Purification, characterization, and cDNA cloning of a new fibrinogenlytic venom protein, Agkisacutacin, from Agkistrodon acutus venom.</title>
        <authorList>
            <person name="Cheng X."/>
            <person name="Qian Y."/>
            <person name="Liu Q.D."/>
            <person name="Li B.X."/>
            <person name="Zhang M."/>
            <person name="Liu J."/>
        </authorList>
    </citation>
    <scope>NUCLEOTIDE SEQUENCE [MRNA]</scope>
    <scope>PROTEIN SEQUENCE OF 24-53; 84-94 AND 125-152</scope>
    <scope>HETERODIMER WITH AGKISACUTACIN-B</scope>
    <scope>FUNCTION</scope>
    <source>
        <tissue>Venom</tissue>
        <tissue>Venom gland</tissue>
    </source>
</reference>
<reference key="2">
    <citation type="journal article" date="2000" name="Sheng Wu Hua Xue Yu Sheng Wu Wu Li Xue Bao">
        <title>Purification and characterization of a platelet agglutinating inhibiting protein (Agkisacutacin) from Agkistrodon acutus venom.</title>
        <authorList>
            <person name="Cheng X."/>
            <person name="Xu Z.Y."/>
            <person name="Liu Q.D."/>
            <person name="Li X.-M."/>
            <person name="Li X.Y."/>
            <person name="Liu J."/>
        </authorList>
    </citation>
    <scope>FUNCTION</scope>
    <source>
        <tissue>Venom</tissue>
    </source>
</reference>
<reference key="3">
    <citation type="journal article" date="2005" name="Biochem. Biophys. Res. Commun.">
        <title>A C-type lectin-like protein from Agkistrodon acutus venom binds to both platelet glycoprotein Ib and coagulation factor IX/factor X.</title>
        <authorList>
            <person name="Li W.-F."/>
            <person name="Chen L."/>
            <person name="Li X.-M."/>
            <person name="Liu J."/>
        </authorList>
    </citation>
    <scope>FUNCTION</scope>
    <source>
        <tissue>Venom</tissue>
    </source>
</reference>
<reference key="4">
    <citation type="journal article" date="2001" name="Proc. Natl. Acad. Sci. U.S.A.">
        <title>Crystal structure of an anticoagulant protein in complex with the Gla domain of factor X.</title>
        <authorList>
            <person name="Mizuno H."/>
            <person name="Fujimoto Z."/>
            <person name="Atoda H."/>
            <person name="Morita T."/>
        </authorList>
    </citation>
    <scope>X-RAY CRYSTALLOGRAPHY (2.3 ANGSTROMS) OF 24-152 IN DIMER WITH AAACP</scope>
    <scope>METAL-BINDING SITES</scope>
    <scope>DISULFIDE BONDS</scope>
    <source>
        <tissue>Venom</tissue>
    </source>
</reference>
<reference key="5">
    <citation type="submission" date="2004-11" db="PDB data bank">
        <title>Characterizations and crystal structures of two snake venom proteins with the activity of binding coagulation factor X from Agkistrodon acutus.</title>
        <authorList>
            <person name="Zhu Z."/>
            <person name="Liu S."/>
            <person name="Mo X."/>
            <person name="Yu X."/>
            <person name="Liang Z."/>
            <person name="Zang J."/>
            <person name="Zhao W."/>
            <person name="Teng M."/>
            <person name="Niu L."/>
        </authorList>
    </citation>
    <scope>X-RAY CRYSTALLOGRAPHY (2.01 ANGSTROMS) OF 24-152 IN DIMER WITH AAACP</scope>
    <scope>METAL-BINDING SITES</scope>
    <scope>DISULFIDE BONDS</scope>
    <source>
        <tissue>Venom</tissue>
    </source>
</reference>
<comment type="function">
    <text evidence="2 4 5">Anticoagulant protein which binds to the gamma-carboxyglutamic acid-domain regions of factors IX (F9) and factor X (F10) in the presence of calcium with a 1 to 1 stoichiometry. Also inhibits platelet aggregation by binding to platelet glycoprotein Ibalpha (GP1BA) and functioning as a blocker of von Willebrand factor (VWF). Is devoid of hemorrhagic and lethal activities. Possesses antithrombotic and thrombolytic activities. Also hydrolyzes the Aalpha-chain of fibrinogen (FGA). Does not affect the Bbeta-chain (FGB) and the gamma chain (FGG).</text>
</comment>
<comment type="subunit">
    <text evidence="3 6">Heterodimer with subunit B of AaACP or agkisacutacin; disulfide-linked.</text>
</comment>
<comment type="subcellular location">
    <subcellularLocation>
        <location>Secreted</location>
    </subcellularLocation>
</comment>
<comment type="tissue specificity">
    <text>Expressed by the venom gland.</text>
</comment>
<comment type="similarity">
    <text evidence="7">Belongs to the snaclec family.</text>
</comment>
<dbReference type="EMBL" id="AF176420">
    <property type="protein sequence ID" value="AAF26286.2"/>
    <property type="molecule type" value="mRNA"/>
</dbReference>
<dbReference type="PIR" id="JC7134">
    <property type="entry name" value="JC7134"/>
</dbReference>
<dbReference type="PDB" id="1IOD">
    <property type="method" value="X-ray"/>
    <property type="resolution" value="2.30 A"/>
    <property type="chains" value="A=24-152"/>
</dbReference>
<dbReference type="PDB" id="1WT9">
    <property type="method" value="X-ray"/>
    <property type="resolution" value="2.01 A"/>
    <property type="chains" value="A=24-152"/>
</dbReference>
<dbReference type="PDBsum" id="1IOD"/>
<dbReference type="PDBsum" id="1WT9"/>
<dbReference type="SMR" id="Q9IAM1"/>
<dbReference type="EvolutionaryTrace" id="Q9IAM1"/>
<dbReference type="GO" id="GO:0005576">
    <property type="term" value="C:extracellular region"/>
    <property type="evidence" value="ECO:0007669"/>
    <property type="project" value="UniProtKB-SubCell"/>
</dbReference>
<dbReference type="GO" id="GO:0046872">
    <property type="term" value="F:metal ion binding"/>
    <property type="evidence" value="ECO:0007669"/>
    <property type="project" value="UniProtKB-KW"/>
</dbReference>
<dbReference type="GO" id="GO:0090729">
    <property type="term" value="F:toxin activity"/>
    <property type="evidence" value="ECO:0007669"/>
    <property type="project" value="UniProtKB-KW"/>
</dbReference>
<dbReference type="FunFam" id="3.10.100.10:FF:000087">
    <property type="entry name" value="Snaclec rhodocetin subunit delta"/>
    <property type="match status" value="1"/>
</dbReference>
<dbReference type="Gene3D" id="3.10.100.10">
    <property type="entry name" value="Mannose-Binding Protein A, subunit A"/>
    <property type="match status" value="1"/>
</dbReference>
<dbReference type="InterPro" id="IPR001304">
    <property type="entry name" value="C-type_lectin-like"/>
</dbReference>
<dbReference type="InterPro" id="IPR016186">
    <property type="entry name" value="C-type_lectin-like/link_sf"/>
</dbReference>
<dbReference type="InterPro" id="IPR050111">
    <property type="entry name" value="C-type_lectin/snaclec_domain"/>
</dbReference>
<dbReference type="InterPro" id="IPR018378">
    <property type="entry name" value="C-type_lectin_CS"/>
</dbReference>
<dbReference type="InterPro" id="IPR016187">
    <property type="entry name" value="CTDL_fold"/>
</dbReference>
<dbReference type="PANTHER" id="PTHR22803">
    <property type="entry name" value="MANNOSE, PHOSPHOLIPASE, LECTIN RECEPTOR RELATED"/>
    <property type="match status" value="1"/>
</dbReference>
<dbReference type="Pfam" id="PF00059">
    <property type="entry name" value="Lectin_C"/>
    <property type="match status" value="1"/>
</dbReference>
<dbReference type="PRINTS" id="PR01504">
    <property type="entry name" value="PNCREATITSAP"/>
</dbReference>
<dbReference type="SMART" id="SM00034">
    <property type="entry name" value="CLECT"/>
    <property type="match status" value="1"/>
</dbReference>
<dbReference type="SUPFAM" id="SSF56436">
    <property type="entry name" value="C-type lectin-like"/>
    <property type="match status" value="1"/>
</dbReference>
<dbReference type="PROSITE" id="PS00615">
    <property type="entry name" value="C_TYPE_LECTIN_1"/>
    <property type="match status" value="1"/>
</dbReference>
<dbReference type="PROSITE" id="PS50041">
    <property type="entry name" value="C_TYPE_LECTIN_2"/>
    <property type="match status" value="1"/>
</dbReference>
<name>SLUA_DEIAC</name>
<organism>
    <name type="scientific">Deinagkistrodon acutus</name>
    <name type="common">Hundred-pace snake</name>
    <name type="synonym">Agkistrodon acutus</name>
    <dbReference type="NCBI Taxonomy" id="36307"/>
    <lineage>
        <taxon>Eukaryota</taxon>
        <taxon>Metazoa</taxon>
        <taxon>Chordata</taxon>
        <taxon>Craniata</taxon>
        <taxon>Vertebrata</taxon>
        <taxon>Euteleostomi</taxon>
        <taxon>Lepidosauria</taxon>
        <taxon>Squamata</taxon>
        <taxon>Bifurcata</taxon>
        <taxon>Unidentata</taxon>
        <taxon>Episquamata</taxon>
        <taxon>Toxicofera</taxon>
        <taxon>Serpentes</taxon>
        <taxon>Colubroidea</taxon>
        <taxon>Viperidae</taxon>
        <taxon>Crotalinae</taxon>
        <taxon>Deinagkistrodon</taxon>
    </lineage>
</organism>
<accession>Q9IAM1</accession>
<sequence>MGRFIFVSFGLLVVFLSLSGTAADCSSGWSSYEGHCYKVFKQSKTWTDAESFCTKQVNGGHLVSIESSGEADFVGQLIAQKIKSAKIHVWIGLRAQNKEKQCSIEWSDGSSISYENWIEEESKKCLGVHIETGFHKWENFYCEQQDPFVCEA</sequence>